<proteinExistence type="inferred from homology"/>
<sequence length="474" mass="50808">MFQAILAIIPILWLILSLAVFRMRGDLACFIGLIITLLTSIIGFHFSIKDGLTAGLEGAMMGFWPIIYIIVAAVFTYNLTTASGGMTVIKRLLMTITEDKRILVLILAWGFGGFLEAIAGFGTAVAIPASILVALGMKPLRAALICLIANTTPTAFGAIGLPVTTLAQVTGLEVKQLSVIVSLQLFILIVAIPFVLVSLTGEGKRPIKGVFGITLASGLAFALPQILVSNYVGAELPSIIGSLFCILVTILFVNLRERGKNASPVGGDVAFKEGIIRCLPFILVFFFIMLTSSLFPAINQLLAKVSTTVSIYTGEHAKPYTIKWLTSPGTMIILATFIAGLIQGMSFKEIGSILAKVLNKLTKTMVTVASIVALSKVMSYSGMINTIAVSLVAVTGGFYPFIAPVIGTLGTFITGSDTSANVLFGELQVKAANNLNMNPYWMAAQYDRGNCRKNDFASKHCSCSGTYWFRRSRR</sequence>
<comment type="function">
    <text>Plays a role in L-lactate utilization.</text>
</comment>
<comment type="subcellular location">
    <subcellularLocation>
        <location>Cell membrane</location>
        <topology>Multi-pass membrane protein</topology>
    </subcellularLocation>
</comment>
<comment type="similarity">
    <text evidence="2">Belongs to the lactate permease family.</text>
</comment>
<dbReference type="EMBL" id="Y07622">
    <property type="protein sequence ID" value="CAA68902.1"/>
    <property type="molecule type" value="Genomic_DNA"/>
</dbReference>
<dbReference type="STRING" id="1346.BMF34_07110"/>
<dbReference type="eggNOG" id="COG1620">
    <property type="taxonomic scope" value="Bacteria"/>
</dbReference>
<dbReference type="GO" id="GO:0005886">
    <property type="term" value="C:plasma membrane"/>
    <property type="evidence" value="ECO:0007669"/>
    <property type="project" value="UniProtKB-SubCell"/>
</dbReference>
<dbReference type="GO" id="GO:0015129">
    <property type="term" value="F:lactate transmembrane transporter activity"/>
    <property type="evidence" value="ECO:0007669"/>
    <property type="project" value="InterPro"/>
</dbReference>
<dbReference type="GO" id="GO:0015295">
    <property type="term" value="F:solute:proton symporter activity"/>
    <property type="evidence" value="ECO:0007669"/>
    <property type="project" value="TreeGrafter"/>
</dbReference>
<dbReference type="InterPro" id="IPR003804">
    <property type="entry name" value="Lactate_perm"/>
</dbReference>
<dbReference type="NCBIfam" id="TIGR00795">
    <property type="entry name" value="lctP"/>
    <property type="match status" value="1"/>
</dbReference>
<dbReference type="PANTHER" id="PTHR30003:SF0">
    <property type="entry name" value="GLYCOLATE PERMEASE GLCA-RELATED"/>
    <property type="match status" value="1"/>
</dbReference>
<dbReference type="PANTHER" id="PTHR30003">
    <property type="entry name" value="L-LACTATE PERMEASE"/>
    <property type="match status" value="1"/>
</dbReference>
<dbReference type="Pfam" id="PF02652">
    <property type="entry name" value="Lactate_perm"/>
    <property type="match status" value="1"/>
</dbReference>
<organism>
    <name type="scientific">Streptococcus iniae</name>
    <name type="common">Streptococcus shiloi</name>
    <dbReference type="NCBI Taxonomy" id="1346"/>
    <lineage>
        <taxon>Bacteria</taxon>
        <taxon>Bacillati</taxon>
        <taxon>Bacillota</taxon>
        <taxon>Bacilli</taxon>
        <taxon>Lactobacillales</taxon>
        <taxon>Streptococcaceae</taxon>
        <taxon>Streptococcus</taxon>
    </lineage>
</organism>
<reference key="1">
    <citation type="journal article" date="1999" name="Appl. Environ. Microbiol.">
        <title>Cloning and analysis of the L-lactate utilization genes from Streptococcus iniae.</title>
        <authorList>
            <person name="Gibello A."/>
            <person name="Collins M.D."/>
            <person name="Dominguez L."/>
            <person name="Fernandez-Garayzabal J.F."/>
            <person name="Richardson P.T."/>
        </authorList>
    </citation>
    <scope>NUCLEOTIDE SEQUENCE [GENOMIC DNA]</scope>
</reference>
<accession>O33654</accession>
<gene>
    <name type="primary">lctP</name>
</gene>
<protein>
    <recommendedName>
        <fullName>L-lactate permease</fullName>
    </recommendedName>
</protein>
<keyword id="KW-1003">Cell membrane</keyword>
<keyword id="KW-0472">Membrane</keyword>
<keyword id="KW-0812">Transmembrane</keyword>
<keyword id="KW-1133">Transmembrane helix</keyword>
<keyword id="KW-0813">Transport</keyword>
<name>LCTP_STRIN</name>
<evidence type="ECO:0000255" key="1"/>
<evidence type="ECO:0000305" key="2"/>
<feature type="chain" id="PRO_0000210379" description="L-lactate permease">
    <location>
        <begin position="1"/>
        <end position="474"/>
    </location>
</feature>
<feature type="transmembrane region" description="Helical" evidence="1">
    <location>
        <begin position="4"/>
        <end position="21"/>
    </location>
</feature>
<feature type="transmembrane region" description="Helical" evidence="1">
    <location>
        <begin position="28"/>
        <end position="48"/>
    </location>
</feature>
<feature type="transmembrane region" description="Helical" evidence="1">
    <location>
        <begin position="63"/>
        <end position="85"/>
    </location>
</feature>
<feature type="transmembrane region" description="Helical" evidence="1">
    <location>
        <begin position="105"/>
        <end position="127"/>
    </location>
</feature>
<feature type="transmembrane region" description="Helical" evidence="1">
    <location>
        <begin position="142"/>
        <end position="164"/>
    </location>
</feature>
<feature type="transmembrane region" description="Helical" evidence="1">
    <location>
        <begin position="177"/>
        <end position="199"/>
    </location>
</feature>
<feature type="transmembrane region" description="Helical" evidence="1">
    <location>
        <begin position="209"/>
        <end position="231"/>
    </location>
</feature>
<feature type="transmembrane region" description="Helical" evidence="1">
    <location>
        <begin position="238"/>
        <end position="255"/>
    </location>
</feature>
<feature type="transmembrane region" description="Helical" evidence="1">
    <location>
        <begin position="281"/>
        <end position="303"/>
    </location>
</feature>
<feature type="transmembrane region" description="Helical" evidence="1">
    <location>
        <begin position="324"/>
        <end position="346"/>
    </location>
</feature>
<feature type="transmembrane region" description="Helical" evidence="1">
    <location>
        <begin position="387"/>
        <end position="409"/>
    </location>
</feature>